<proteinExistence type="evidence at protein level"/>
<name>HB2Q_MOUSE</name>
<feature type="signal peptide">
    <location>
        <begin position="1"/>
        <end position="27"/>
    </location>
</feature>
<feature type="chain" id="PRO_0000018997" description="H-2 class II histocompatibility antigen, A-Q beta chain">
    <location>
        <begin position="28"/>
        <end position="265"/>
    </location>
</feature>
<feature type="topological domain" description="Extracellular" evidence="1">
    <location>
        <begin position="28"/>
        <end position="227"/>
    </location>
</feature>
<feature type="transmembrane region" description="Helical" evidence="1">
    <location>
        <begin position="228"/>
        <end position="247"/>
    </location>
</feature>
<feature type="topological domain" description="Cytoplasmic" evidence="1">
    <location>
        <begin position="248"/>
        <end position="265"/>
    </location>
</feature>
<feature type="domain" description="Ig-like C1-type">
    <location>
        <begin position="125"/>
        <end position="213"/>
    </location>
</feature>
<feature type="region of interest" description="Beta-1">
    <location>
        <begin position="28"/>
        <end position="122"/>
    </location>
</feature>
<feature type="region of interest" description="Beta-2">
    <location>
        <begin position="123"/>
        <end position="217"/>
    </location>
</feature>
<feature type="region of interest" description="Connecting peptide">
    <location>
        <begin position="218"/>
        <end position="227"/>
    </location>
</feature>
<feature type="glycosylation site" description="N-linked (GlcNAc...) asparagine" evidence="1">
    <location>
        <position position="46"/>
    </location>
</feature>
<feature type="disulfide bond" evidence="2">
    <location>
        <begin position="42"/>
        <end position="106"/>
    </location>
</feature>
<feature type="disulfide bond" evidence="2">
    <location>
        <begin position="145"/>
        <end position="201"/>
    </location>
</feature>
<sequence>MALQIPSLLLSAAVVVLMVLSSPRTEGGNSERHFVAQLKGECYFTNGTQRIRSVNRYIYNREEWVRFDSDVGEYRAVTELGRPDAEYWNSQPEILERTRAEVDTVCRHNYEGVETHTSLRRLEQPNVAISLSRTEALNHHNTLVCSVTDFYPAKIKVRWFRNGQEETVGVSSTQLIRNGDWTFQVLVMLEMTPHQGEVYTCHVEHPSLKSPITVEWRAQSESARSKMLSGIGGCVLGVIFLGLGLFIRHRSQKGPRGPPPAGLLQ</sequence>
<keyword id="KW-1064">Adaptive immunity</keyword>
<keyword id="KW-1015">Disulfide bond</keyword>
<keyword id="KW-0325">Glycoprotein</keyword>
<keyword id="KW-0391">Immunity</keyword>
<keyword id="KW-0472">Membrane</keyword>
<keyword id="KW-0491">MHC II</keyword>
<keyword id="KW-1185">Reference proteome</keyword>
<keyword id="KW-0732">Signal</keyword>
<keyword id="KW-0812">Transmembrane</keyword>
<keyword id="KW-1133">Transmembrane helix</keyword>
<keyword id="KW-0832">Ubl conjugation</keyword>
<protein>
    <recommendedName>
        <fullName>H-2 class II histocompatibility antigen, A-Q beta chain</fullName>
    </recommendedName>
</protein>
<gene>
    <name type="primary">H2-Ab1</name>
</gene>
<dbReference type="EMBL" id="M13537">
    <property type="protein sequence ID" value="AAA39633.1"/>
    <property type="molecule type" value="mRNA"/>
</dbReference>
<dbReference type="EMBL" id="M31825">
    <property type="protein sequence ID" value="AAA39631.1"/>
    <property type="molecule type" value="Genomic_DNA"/>
</dbReference>
<dbReference type="PIR" id="A02237">
    <property type="entry name" value="HLMSQB"/>
</dbReference>
<dbReference type="SMR" id="P06342"/>
<dbReference type="GlyCosmos" id="P06342">
    <property type="glycosylation" value="1 site, No reported glycans"/>
</dbReference>
<dbReference type="PhosphoSitePlus" id="P06342"/>
<dbReference type="jPOST" id="P06342"/>
<dbReference type="PeptideAtlas" id="P06342"/>
<dbReference type="ProteomicsDB" id="269681"/>
<dbReference type="AGR" id="MGI:103070"/>
<dbReference type="MGI" id="MGI:103070">
    <property type="gene designation" value="H2-Ab1"/>
</dbReference>
<dbReference type="OrthoDB" id="10043043at2759"/>
<dbReference type="ChiTaRS" id="H2-Ab1">
    <property type="organism name" value="mouse"/>
</dbReference>
<dbReference type="Proteomes" id="UP000000589">
    <property type="component" value="Unplaced"/>
</dbReference>
<dbReference type="GO" id="GO:0005769">
    <property type="term" value="C:early endosome"/>
    <property type="evidence" value="ECO:0000314"/>
    <property type="project" value="MGI"/>
</dbReference>
<dbReference type="GO" id="GO:0009897">
    <property type="term" value="C:external side of plasma membrane"/>
    <property type="evidence" value="ECO:0000314"/>
    <property type="project" value="MGI"/>
</dbReference>
<dbReference type="GO" id="GO:0005794">
    <property type="term" value="C:Golgi apparatus"/>
    <property type="evidence" value="ECO:0000314"/>
    <property type="project" value="MGI"/>
</dbReference>
<dbReference type="GO" id="GO:0016020">
    <property type="term" value="C:membrane"/>
    <property type="evidence" value="ECO:0000314"/>
    <property type="project" value="MGI"/>
</dbReference>
<dbReference type="GO" id="GO:0042613">
    <property type="term" value="C:MHC class II protein complex"/>
    <property type="evidence" value="ECO:0000314"/>
    <property type="project" value="MGI"/>
</dbReference>
<dbReference type="GO" id="GO:0005771">
    <property type="term" value="C:multivesicular body"/>
    <property type="evidence" value="ECO:0000314"/>
    <property type="project" value="MGI"/>
</dbReference>
<dbReference type="GO" id="GO:0005886">
    <property type="term" value="C:plasma membrane"/>
    <property type="evidence" value="ECO:0000314"/>
    <property type="project" value="MGI"/>
</dbReference>
<dbReference type="GO" id="GO:0042605">
    <property type="term" value="F:peptide antigen binding"/>
    <property type="evidence" value="ECO:0000314"/>
    <property type="project" value="MGI"/>
</dbReference>
<dbReference type="GO" id="GO:0002250">
    <property type="term" value="P:adaptive immune response"/>
    <property type="evidence" value="ECO:0007669"/>
    <property type="project" value="UniProtKB-KW"/>
</dbReference>
<dbReference type="GO" id="GO:0019882">
    <property type="term" value="P:antigen processing and presentation"/>
    <property type="evidence" value="ECO:0000314"/>
    <property type="project" value="MGI"/>
</dbReference>
<dbReference type="GO" id="GO:0019886">
    <property type="term" value="P:antigen processing and presentation of exogenous peptide antigen via MHC class II"/>
    <property type="evidence" value="ECO:0000314"/>
    <property type="project" value="MGI"/>
</dbReference>
<dbReference type="GO" id="GO:0048002">
    <property type="term" value="P:antigen processing and presentation of peptide antigen"/>
    <property type="evidence" value="ECO:0000314"/>
    <property type="project" value="MGI"/>
</dbReference>
<dbReference type="GO" id="GO:0006955">
    <property type="term" value="P:immune response"/>
    <property type="evidence" value="ECO:0000315"/>
    <property type="project" value="MGI"/>
</dbReference>
<dbReference type="CDD" id="cd21001">
    <property type="entry name" value="IgC1_MHC_II_beta_HLA-DQ_I-A"/>
    <property type="match status" value="1"/>
</dbReference>
<dbReference type="FunFam" id="2.60.40.10:FF:000116">
    <property type="entry name" value="HLA class II histocompatibility antigen, DRB1-1 beta chain"/>
    <property type="match status" value="1"/>
</dbReference>
<dbReference type="FunFam" id="3.10.320.10:FF:000001">
    <property type="entry name" value="HLA class II histocompatibility antigen, DRB1-1 beta chain"/>
    <property type="match status" value="1"/>
</dbReference>
<dbReference type="Gene3D" id="3.10.320.10">
    <property type="entry name" value="Class II Histocompatibility Antigen, M Beta Chain, Chain B, domain 1"/>
    <property type="match status" value="1"/>
</dbReference>
<dbReference type="Gene3D" id="2.60.40.10">
    <property type="entry name" value="Immunoglobulins"/>
    <property type="match status" value="1"/>
</dbReference>
<dbReference type="InterPro" id="IPR007110">
    <property type="entry name" value="Ig-like_dom"/>
</dbReference>
<dbReference type="InterPro" id="IPR036179">
    <property type="entry name" value="Ig-like_dom_sf"/>
</dbReference>
<dbReference type="InterPro" id="IPR013783">
    <property type="entry name" value="Ig-like_fold"/>
</dbReference>
<dbReference type="InterPro" id="IPR003006">
    <property type="entry name" value="Ig/MHC_CS"/>
</dbReference>
<dbReference type="InterPro" id="IPR003597">
    <property type="entry name" value="Ig_C1-set"/>
</dbReference>
<dbReference type="InterPro" id="IPR050160">
    <property type="entry name" value="MHC/Immunoglobulin"/>
</dbReference>
<dbReference type="InterPro" id="IPR011162">
    <property type="entry name" value="MHC_I/II-like_Ag-recog"/>
</dbReference>
<dbReference type="InterPro" id="IPR014745">
    <property type="entry name" value="MHC_II_a/b_N"/>
</dbReference>
<dbReference type="InterPro" id="IPR000353">
    <property type="entry name" value="MHC_II_b_N"/>
</dbReference>
<dbReference type="PANTHER" id="PTHR19944:SF101">
    <property type="entry name" value="HLA CLASS II HISTOCOMPATIBILITY ANTIGEN, DQ BETA 1 CHAIN"/>
    <property type="match status" value="1"/>
</dbReference>
<dbReference type="PANTHER" id="PTHR19944">
    <property type="entry name" value="MHC CLASS II-RELATED"/>
    <property type="match status" value="1"/>
</dbReference>
<dbReference type="Pfam" id="PF07654">
    <property type="entry name" value="C1-set"/>
    <property type="match status" value="1"/>
</dbReference>
<dbReference type="Pfam" id="PF00969">
    <property type="entry name" value="MHC_II_beta"/>
    <property type="match status" value="1"/>
</dbReference>
<dbReference type="SMART" id="SM00407">
    <property type="entry name" value="IGc1"/>
    <property type="match status" value="1"/>
</dbReference>
<dbReference type="SMART" id="SM00921">
    <property type="entry name" value="MHC_II_beta"/>
    <property type="match status" value="1"/>
</dbReference>
<dbReference type="SUPFAM" id="SSF48726">
    <property type="entry name" value="Immunoglobulin"/>
    <property type="match status" value="1"/>
</dbReference>
<dbReference type="SUPFAM" id="SSF54452">
    <property type="entry name" value="MHC antigen-recognition domain"/>
    <property type="match status" value="1"/>
</dbReference>
<dbReference type="PROSITE" id="PS50835">
    <property type="entry name" value="IG_LIKE"/>
    <property type="match status" value="1"/>
</dbReference>
<dbReference type="PROSITE" id="PS00290">
    <property type="entry name" value="IG_MHC"/>
    <property type="match status" value="1"/>
</dbReference>
<comment type="subcellular location">
    <subcellularLocation>
        <location evidence="5">Membrane</location>
        <topology evidence="5">Single-pass type I membrane protein</topology>
    </subcellularLocation>
</comment>
<comment type="PTM">
    <text evidence="3 4">Ubiquitinated in immature dendritic cells leading to down-regulation of MHC class II.</text>
</comment>
<comment type="similarity">
    <text evidence="5">Belongs to the MHC class II family.</text>
</comment>
<accession>P06342</accession>
<accession>O19469</accession>
<reference key="1">
    <citation type="journal article" date="1986" name="Proc. Natl. Acad. Sci. U.S.A.">
        <title>Sequence analysis and structure-function correlations of murine q, k, u, s, and f haplotype I-A beta cDNA clones.</title>
        <authorList>
            <person name="Estess P."/>
            <person name="Begovich A.B."/>
            <person name="Koo M."/>
            <person name="Jones P.P."/>
            <person name="McDevitt H.O."/>
        </authorList>
    </citation>
    <scope>NUCLEOTIDE SEQUENCE [MRNA]</scope>
</reference>
<reference key="2">
    <citation type="journal article" date="1989" name="Proc. Natl. Acad. Sci. U.S.A.">
        <title>Localization of a critical restriction site on the I-A-beta chain that determines susceptibility to collagen-induced arthritis in mice.</title>
        <authorList>
            <person name="Holmdahl R."/>
            <person name="Karlsson M."/>
            <person name="Andersson M.E."/>
            <person name="Rask L."/>
            <person name="Andersson L."/>
        </authorList>
    </citation>
    <scope>NUCLEOTIDE SEQUENCE [GENOMIC DNA] OF 33-122</scope>
</reference>
<reference key="3">
    <citation type="journal article" date="2006" name="Immunity">
        <title>Dendritic cells regulate exposure of MHC class II at their plasma membrane by oligoubiquitination.</title>
        <authorList>
            <person name="van Niel G."/>
            <person name="Wubbolts R."/>
            <person name="Ten Broeke T."/>
            <person name="Buschow S.I."/>
            <person name="Ossendorp F.A."/>
            <person name="Melief C.J."/>
            <person name="Raposo G."/>
            <person name="van Balkom B.W."/>
            <person name="Stoorvogel W."/>
        </authorList>
    </citation>
    <scope>UBIQUITINATION</scope>
</reference>
<reference key="4">
    <citation type="journal article" date="2006" name="Nature">
        <title>Surface expression of MHC class II in dendritic cells is controlled by regulated ubiquitination.</title>
        <authorList>
            <person name="Shin J.S."/>
            <person name="Ebersold M."/>
            <person name="Pypaert M."/>
            <person name="Delamarre L."/>
            <person name="Hartley A."/>
            <person name="Mellman I."/>
        </authorList>
    </citation>
    <scope>UBIQUITINATION</scope>
</reference>
<reference key="5">
    <citation type="journal article" date="2010" name="Cell">
        <title>A tissue-specific atlas of mouse protein phosphorylation and expression.</title>
        <authorList>
            <person name="Huttlin E.L."/>
            <person name="Jedrychowski M.P."/>
            <person name="Elias J.E."/>
            <person name="Goswami T."/>
            <person name="Rad R."/>
            <person name="Beausoleil S.A."/>
            <person name="Villen J."/>
            <person name="Haas W."/>
            <person name="Sowa M.E."/>
            <person name="Gygi S.P."/>
        </authorList>
    </citation>
    <scope>IDENTIFICATION BY MASS SPECTROMETRY [LARGE SCALE ANALYSIS]</scope>
    <source>
        <tissue>Lung</tissue>
        <tissue>Spleen</tissue>
    </source>
</reference>
<organism>
    <name type="scientific">Mus musculus</name>
    <name type="common">Mouse</name>
    <dbReference type="NCBI Taxonomy" id="10090"/>
    <lineage>
        <taxon>Eukaryota</taxon>
        <taxon>Metazoa</taxon>
        <taxon>Chordata</taxon>
        <taxon>Craniata</taxon>
        <taxon>Vertebrata</taxon>
        <taxon>Euteleostomi</taxon>
        <taxon>Mammalia</taxon>
        <taxon>Eutheria</taxon>
        <taxon>Euarchontoglires</taxon>
        <taxon>Glires</taxon>
        <taxon>Rodentia</taxon>
        <taxon>Myomorpha</taxon>
        <taxon>Muroidea</taxon>
        <taxon>Muridae</taxon>
        <taxon>Murinae</taxon>
        <taxon>Mus</taxon>
        <taxon>Mus</taxon>
    </lineage>
</organism>
<evidence type="ECO:0000255" key="1"/>
<evidence type="ECO:0000255" key="2">
    <source>
        <dbReference type="PROSITE-ProRule" id="PRU00114"/>
    </source>
</evidence>
<evidence type="ECO:0000269" key="3">
    <source>
    </source>
</evidence>
<evidence type="ECO:0000269" key="4">
    <source>
    </source>
</evidence>
<evidence type="ECO:0000305" key="5"/>